<sequence>MAHLLLLHGPNLNLLGTREPEVYGRTTLAQIDAALVDRAQAAGHTLDCLQSNAEHVLVERIHAAREDGTAFILINPAAFTHTSVSLRDALLGVGLPFVEIHLSNPHTREPFRHHSYLSDKAAGVICGFGADSYRLALEAVIARLERDS</sequence>
<name>AROQ_XANCP</name>
<keyword id="KW-0028">Amino-acid biosynthesis</keyword>
<keyword id="KW-0057">Aromatic amino acid biosynthesis</keyword>
<keyword id="KW-0456">Lyase</keyword>
<keyword id="KW-1185">Reference proteome</keyword>
<gene>
    <name evidence="1" type="primary">aroQ</name>
    <name type="ordered locus">XCC0518</name>
</gene>
<dbReference type="EC" id="4.2.1.10" evidence="1"/>
<dbReference type="EMBL" id="AE008922">
    <property type="protein sequence ID" value="AAM39834.1"/>
    <property type="molecule type" value="Genomic_DNA"/>
</dbReference>
<dbReference type="RefSeq" id="NP_635910.1">
    <property type="nucleotide sequence ID" value="NC_003902.1"/>
</dbReference>
<dbReference type="RefSeq" id="WP_011035767.1">
    <property type="nucleotide sequence ID" value="NC_003902.1"/>
</dbReference>
<dbReference type="SMR" id="Q8PD27"/>
<dbReference type="STRING" id="190485.XCC0518"/>
<dbReference type="EnsemblBacteria" id="AAM39834">
    <property type="protein sequence ID" value="AAM39834"/>
    <property type="gene ID" value="XCC0518"/>
</dbReference>
<dbReference type="GeneID" id="58011833"/>
<dbReference type="KEGG" id="xcc:XCC0518"/>
<dbReference type="PATRIC" id="fig|190485.4.peg.568"/>
<dbReference type="eggNOG" id="COG0757">
    <property type="taxonomic scope" value="Bacteria"/>
</dbReference>
<dbReference type="HOGENOM" id="CLU_090968_1_0_6"/>
<dbReference type="OrthoDB" id="9790793at2"/>
<dbReference type="UniPathway" id="UPA00053">
    <property type="reaction ID" value="UER00086"/>
</dbReference>
<dbReference type="Proteomes" id="UP000001010">
    <property type="component" value="Chromosome"/>
</dbReference>
<dbReference type="GO" id="GO:0003855">
    <property type="term" value="F:3-dehydroquinate dehydratase activity"/>
    <property type="evidence" value="ECO:0000318"/>
    <property type="project" value="GO_Central"/>
</dbReference>
<dbReference type="GO" id="GO:0008652">
    <property type="term" value="P:amino acid biosynthetic process"/>
    <property type="evidence" value="ECO:0007669"/>
    <property type="project" value="UniProtKB-KW"/>
</dbReference>
<dbReference type="GO" id="GO:0009073">
    <property type="term" value="P:aromatic amino acid family biosynthetic process"/>
    <property type="evidence" value="ECO:0007669"/>
    <property type="project" value="UniProtKB-KW"/>
</dbReference>
<dbReference type="GO" id="GO:0009423">
    <property type="term" value="P:chorismate biosynthetic process"/>
    <property type="evidence" value="ECO:0007669"/>
    <property type="project" value="UniProtKB-UniRule"/>
</dbReference>
<dbReference type="GO" id="GO:0019631">
    <property type="term" value="P:quinate catabolic process"/>
    <property type="evidence" value="ECO:0000318"/>
    <property type="project" value="GO_Central"/>
</dbReference>
<dbReference type="CDD" id="cd00466">
    <property type="entry name" value="DHQase_II"/>
    <property type="match status" value="1"/>
</dbReference>
<dbReference type="Gene3D" id="3.40.50.9100">
    <property type="entry name" value="Dehydroquinase, class II"/>
    <property type="match status" value="1"/>
</dbReference>
<dbReference type="HAMAP" id="MF_00169">
    <property type="entry name" value="AroQ"/>
    <property type="match status" value="1"/>
</dbReference>
<dbReference type="InterPro" id="IPR001874">
    <property type="entry name" value="DHquinase_II"/>
</dbReference>
<dbReference type="InterPro" id="IPR018509">
    <property type="entry name" value="DHquinase_II_CS"/>
</dbReference>
<dbReference type="InterPro" id="IPR036441">
    <property type="entry name" value="DHquinase_II_sf"/>
</dbReference>
<dbReference type="NCBIfam" id="TIGR01088">
    <property type="entry name" value="aroQ"/>
    <property type="match status" value="1"/>
</dbReference>
<dbReference type="NCBIfam" id="NF003804">
    <property type="entry name" value="PRK05395.1-1"/>
    <property type="match status" value="1"/>
</dbReference>
<dbReference type="NCBIfam" id="NF003805">
    <property type="entry name" value="PRK05395.1-2"/>
    <property type="match status" value="1"/>
</dbReference>
<dbReference type="NCBIfam" id="NF003806">
    <property type="entry name" value="PRK05395.1-3"/>
    <property type="match status" value="1"/>
</dbReference>
<dbReference type="NCBIfam" id="NF003807">
    <property type="entry name" value="PRK05395.1-4"/>
    <property type="match status" value="1"/>
</dbReference>
<dbReference type="PANTHER" id="PTHR21272">
    <property type="entry name" value="CATABOLIC 3-DEHYDROQUINASE"/>
    <property type="match status" value="1"/>
</dbReference>
<dbReference type="PANTHER" id="PTHR21272:SF3">
    <property type="entry name" value="CATABOLIC 3-DEHYDROQUINASE"/>
    <property type="match status" value="1"/>
</dbReference>
<dbReference type="Pfam" id="PF01220">
    <property type="entry name" value="DHquinase_II"/>
    <property type="match status" value="1"/>
</dbReference>
<dbReference type="PIRSF" id="PIRSF001399">
    <property type="entry name" value="DHquinase_II"/>
    <property type="match status" value="1"/>
</dbReference>
<dbReference type="SUPFAM" id="SSF52304">
    <property type="entry name" value="Type II 3-dehydroquinate dehydratase"/>
    <property type="match status" value="1"/>
</dbReference>
<dbReference type="PROSITE" id="PS01029">
    <property type="entry name" value="DEHYDROQUINASE_II"/>
    <property type="match status" value="1"/>
</dbReference>
<comment type="function">
    <text evidence="1">Catalyzes a trans-dehydration via an enolate intermediate.</text>
</comment>
<comment type="catalytic activity">
    <reaction evidence="1">
        <text>3-dehydroquinate = 3-dehydroshikimate + H2O</text>
        <dbReference type="Rhea" id="RHEA:21096"/>
        <dbReference type="ChEBI" id="CHEBI:15377"/>
        <dbReference type="ChEBI" id="CHEBI:16630"/>
        <dbReference type="ChEBI" id="CHEBI:32364"/>
        <dbReference type="EC" id="4.2.1.10"/>
    </reaction>
</comment>
<comment type="pathway">
    <text evidence="1">Metabolic intermediate biosynthesis; chorismate biosynthesis; chorismate from D-erythrose 4-phosphate and phosphoenolpyruvate: step 3/7.</text>
</comment>
<comment type="subunit">
    <text evidence="1">Homododecamer.</text>
</comment>
<comment type="similarity">
    <text evidence="1">Belongs to the type-II 3-dehydroquinase family.</text>
</comment>
<proteinExistence type="inferred from homology"/>
<feature type="chain" id="PRO_0000159943" description="3-dehydroquinate dehydratase">
    <location>
        <begin position="1"/>
        <end position="148"/>
    </location>
</feature>
<feature type="active site" description="Proton acceptor" evidence="1">
    <location>
        <position position="23"/>
    </location>
</feature>
<feature type="active site" description="Proton donor" evidence="1">
    <location>
        <position position="101"/>
    </location>
</feature>
<feature type="binding site" evidence="1">
    <location>
        <position position="75"/>
    </location>
    <ligand>
        <name>substrate</name>
    </ligand>
</feature>
<feature type="binding site" evidence="1">
    <location>
        <position position="81"/>
    </location>
    <ligand>
        <name>substrate</name>
    </ligand>
</feature>
<feature type="binding site" evidence="1">
    <location>
        <position position="88"/>
    </location>
    <ligand>
        <name>substrate</name>
    </ligand>
</feature>
<feature type="binding site" evidence="1">
    <location>
        <begin position="102"/>
        <end position="103"/>
    </location>
    <ligand>
        <name>substrate</name>
    </ligand>
</feature>
<feature type="binding site" evidence="1">
    <location>
        <position position="112"/>
    </location>
    <ligand>
        <name>substrate</name>
    </ligand>
</feature>
<feature type="site" description="Transition state stabilizer" evidence="1">
    <location>
        <position position="18"/>
    </location>
</feature>
<protein>
    <recommendedName>
        <fullName evidence="1">3-dehydroquinate dehydratase</fullName>
        <shortName evidence="1">3-dehydroquinase</shortName>
        <ecNumber evidence="1">4.2.1.10</ecNumber>
    </recommendedName>
    <alternativeName>
        <fullName evidence="1">Type II DHQase</fullName>
    </alternativeName>
</protein>
<evidence type="ECO:0000255" key="1">
    <source>
        <dbReference type="HAMAP-Rule" id="MF_00169"/>
    </source>
</evidence>
<reference key="1">
    <citation type="journal article" date="2002" name="Nature">
        <title>Comparison of the genomes of two Xanthomonas pathogens with differing host specificities.</title>
        <authorList>
            <person name="da Silva A.C.R."/>
            <person name="Ferro J.A."/>
            <person name="Reinach F.C."/>
            <person name="Farah C.S."/>
            <person name="Furlan L.R."/>
            <person name="Quaggio R.B."/>
            <person name="Monteiro-Vitorello C.B."/>
            <person name="Van Sluys M.A."/>
            <person name="Almeida N.F. Jr."/>
            <person name="Alves L.M.C."/>
            <person name="do Amaral A.M."/>
            <person name="Bertolini M.C."/>
            <person name="Camargo L.E.A."/>
            <person name="Camarotte G."/>
            <person name="Cannavan F."/>
            <person name="Cardozo J."/>
            <person name="Chambergo F."/>
            <person name="Ciapina L.P."/>
            <person name="Cicarelli R.M.B."/>
            <person name="Coutinho L.L."/>
            <person name="Cursino-Santos J.R."/>
            <person name="El-Dorry H."/>
            <person name="Faria J.B."/>
            <person name="Ferreira A.J.S."/>
            <person name="Ferreira R.C.C."/>
            <person name="Ferro M.I.T."/>
            <person name="Formighieri E.F."/>
            <person name="Franco M.C."/>
            <person name="Greggio C.C."/>
            <person name="Gruber A."/>
            <person name="Katsuyama A.M."/>
            <person name="Kishi L.T."/>
            <person name="Leite R.P."/>
            <person name="Lemos E.G.M."/>
            <person name="Lemos M.V.F."/>
            <person name="Locali E.C."/>
            <person name="Machado M.A."/>
            <person name="Madeira A.M.B.N."/>
            <person name="Martinez-Rossi N.M."/>
            <person name="Martins E.C."/>
            <person name="Meidanis J."/>
            <person name="Menck C.F.M."/>
            <person name="Miyaki C.Y."/>
            <person name="Moon D.H."/>
            <person name="Moreira L.M."/>
            <person name="Novo M.T.M."/>
            <person name="Okura V.K."/>
            <person name="Oliveira M.C."/>
            <person name="Oliveira V.R."/>
            <person name="Pereira H.A."/>
            <person name="Rossi A."/>
            <person name="Sena J.A.D."/>
            <person name="Silva C."/>
            <person name="de Souza R.F."/>
            <person name="Spinola L.A.F."/>
            <person name="Takita M.A."/>
            <person name="Tamura R.E."/>
            <person name="Teixeira E.C."/>
            <person name="Tezza R.I.D."/>
            <person name="Trindade dos Santos M."/>
            <person name="Truffi D."/>
            <person name="Tsai S.M."/>
            <person name="White F.F."/>
            <person name="Setubal J.C."/>
            <person name="Kitajima J.P."/>
        </authorList>
    </citation>
    <scope>NUCLEOTIDE SEQUENCE [LARGE SCALE GENOMIC DNA]</scope>
    <source>
        <strain>ATCC 33913 / DSM 3586 / NCPPB 528 / LMG 568 / P 25</strain>
    </source>
</reference>
<organism>
    <name type="scientific">Xanthomonas campestris pv. campestris (strain ATCC 33913 / DSM 3586 / NCPPB 528 / LMG 568 / P 25)</name>
    <dbReference type="NCBI Taxonomy" id="190485"/>
    <lineage>
        <taxon>Bacteria</taxon>
        <taxon>Pseudomonadati</taxon>
        <taxon>Pseudomonadota</taxon>
        <taxon>Gammaproteobacteria</taxon>
        <taxon>Lysobacterales</taxon>
        <taxon>Lysobacteraceae</taxon>
        <taxon>Xanthomonas</taxon>
    </lineage>
</organism>
<accession>Q8PD27</accession>